<organism>
    <name type="scientific">Bacillus cereus (strain ATCC 10987 / NRS 248)</name>
    <dbReference type="NCBI Taxonomy" id="222523"/>
    <lineage>
        <taxon>Bacteria</taxon>
        <taxon>Bacillati</taxon>
        <taxon>Bacillota</taxon>
        <taxon>Bacilli</taxon>
        <taxon>Bacillales</taxon>
        <taxon>Bacillaceae</taxon>
        <taxon>Bacillus</taxon>
        <taxon>Bacillus cereus group</taxon>
    </lineage>
</organism>
<gene>
    <name evidence="1" type="primary">rplC</name>
    <name type="ordered locus">BCE_0110</name>
</gene>
<accession>Q73F96</accession>
<comment type="function">
    <text evidence="1">One of the primary rRNA binding proteins, it binds directly near the 3'-end of the 23S rRNA, where it nucleates assembly of the 50S subunit.</text>
</comment>
<comment type="subunit">
    <text evidence="1">Part of the 50S ribosomal subunit. Forms a cluster with proteins L14 and L19.</text>
</comment>
<comment type="similarity">
    <text evidence="1">Belongs to the universal ribosomal protein uL3 family.</text>
</comment>
<dbReference type="EMBL" id="AE017194">
    <property type="protein sequence ID" value="AAS39046.1"/>
    <property type="molecule type" value="Genomic_DNA"/>
</dbReference>
<dbReference type="SMR" id="Q73F96"/>
<dbReference type="KEGG" id="bca:BCE_0110"/>
<dbReference type="HOGENOM" id="CLU_044142_4_1_9"/>
<dbReference type="Proteomes" id="UP000002527">
    <property type="component" value="Chromosome"/>
</dbReference>
<dbReference type="GO" id="GO:0022625">
    <property type="term" value="C:cytosolic large ribosomal subunit"/>
    <property type="evidence" value="ECO:0007669"/>
    <property type="project" value="TreeGrafter"/>
</dbReference>
<dbReference type="GO" id="GO:0019843">
    <property type="term" value="F:rRNA binding"/>
    <property type="evidence" value="ECO:0007669"/>
    <property type="project" value="UniProtKB-UniRule"/>
</dbReference>
<dbReference type="GO" id="GO:0003735">
    <property type="term" value="F:structural constituent of ribosome"/>
    <property type="evidence" value="ECO:0007669"/>
    <property type="project" value="InterPro"/>
</dbReference>
<dbReference type="GO" id="GO:0006412">
    <property type="term" value="P:translation"/>
    <property type="evidence" value="ECO:0007669"/>
    <property type="project" value="UniProtKB-UniRule"/>
</dbReference>
<dbReference type="FunFam" id="2.40.30.10:FF:000004">
    <property type="entry name" value="50S ribosomal protein L3"/>
    <property type="match status" value="1"/>
</dbReference>
<dbReference type="FunFam" id="3.30.160.810:FF:000002">
    <property type="entry name" value="50S ribosomal protein L3"/>
    <property type="match status" value="1"/>
</dbReference>
<dbReference type="Gene3D" id="3.30.160.810">
    <property type="match status" value="1"/>
</dbReference>
<dbReference type="Gene3D" id="2.40.30.10">
    <property type="entry name" value="Translation factors"/>
    <property type="match status" value="1"/>
</dbReference>
<dbReference type="HAMAP" id="MF_01325_B">
    <property type="entry name" value="Ribosomal_uL3_B"/>
    <property type="match status" value="1"/>
</dbReference>
<dbReference type="InterPro" id="IPR000597">
    <property type="entry name" value="Ribosomal_uL3"/>
</dbReference>
<dbReference type="InterPro" id="IPR019927">
    <property type="entry name" value="Ribosomal_uL3_bac/org-type"/>
</dbReference>
<dbReference type="InterPro" id="IPR019926">
    <property type="entry name" value="Ribosomal_uL3_CS"/>
</dbReference>
<dbReference type="InterPro" id="IPR009000">
    <property type="entry name" value="Transl_B-barrel_sf"/>
</dbReference>
<dbReference type="NCBIfam" id="TIGR03625">
    <property type="entry name" value="L3_bact"/>
    <property type="match status" value="1"/>
</dbReference>
<dbReference type="PANTHER" id="PTHR11229">
    <property type="entry name" value="50S RIBOSOMAL PROTEIN L3"/>
    <property type="match status" value="1"/>
</dbReference>
<dbReference type="PANTHER" id="PTHR11229:SF16">
    <property type="entry name" value="LARGE RIBOSOMAL SUBUNIT PROTEIN UL3C"/>
    <property type="match status" value="1"/>
</dbReference>
<dbReference type="Pfam" id="PF00297">
    <property type="entry name" value="Ribosomal_L3"/>
    <property type="match status" value="1"/>
</dbReference>
<dbReference type="SUPFAM" id="SSF50447">
    <property type="entry name" value="Translation proteins"/>
    <property type="match status" value="1"/>
</dbReference>
<dbReference type="PROSITE" id="PS00474">
    <property type="entry name" value="RIBOSOMAL_L3"/>
    <property type="match status" value="1"/>
</dbReference>
<protein>
    <recommendedName>
        <fullName evidence="1">Large ribosomal subunit protein uL3</fullName>
    </recommendedName>
    <alternativeName>
        <fullName evidence="3">50S ribosomal protein L3</fullName>
    </alternativeName>
</protein>
<keyword id="KW-0687">Ribonucleoprotein</keyword>
<keyword id="KW-0689">Ribosomal protein</keyword>
<keyword id="KW-0694">RNA-binding</keyword>
<keyword id="KW-0699">rRNA-binding</keyword>
<proteinExistence type="inferred from homology"/>
<sequence>MTKGILGRKIGMTQVFAENGELIPVTVIAANPNVVLQKKTTETDGYNAIQLGFEDKREKLTNKPEQGHTAKASTTPKRFIREIRDADVDGLEVGQEVKVDVFATGEIVDVTGISKGKGFQGVIKRHGQSRGPMSHGSRYHRRPGSMGPVAPNRVFKGKKLAGRMGGDQVTIQNLEIVQVDTERNLLLVKGNVPGAKKSLVVVQGAVKVSK</sequence>
<feature type="chain" id="PRO_0000241310" description="Large ribosomal subunit protein uL3">
    <location>
        <begin position="1"/>
        <end position="210"/>
    </location>
</feature>
<feature type="region of interest" description="Disordered" evidence="2">
    <location>
        <begin position="125"/>
        <end position="151"/>
    </location>
</feature>
<evidence type="ECO:0000255" key="1">
    <source>
        <dbReference type="HAMAP-Rule" id="MF_01325"/>
    </source>
</evidence>
<evidence type="ECO:0000256" key="2">
    <source>
        <dbReference type="SAM" id="MobiDB-lite"/>
    </source>
</evidence>
<evidence type="ECO:0000305" key="3"/>
<reference key="1">
    <citation type="journal article" date="2004" name="Nucleic Acids Res.">
        <title>The genome sequence of Bacillus cereus ATCC 10987 reveals metabolic adaptations and a large plasmid related to Bacillus anthracis pXO1.</title>
        <authorList>
            <person name="Rasko D.A."/>
            <person name="Ravel J."/>
            <person name="Oekstad O.A."/>
            <person name="Helgason E."/>
            <person name="Cer R.Z."/>
            <person name="Jiang L."/>
            <person name="Shores K.A."/>
            <person name="Fouts D.E."/>
            <person name="Tourasse N.J."/>
            <person name="Angiuoli S.V."/>
            <person name="Kolonay J.F."/>
            <person name="Nelson W.C."/>
            <person name="Kolstoe A.-B."/>
            <person name="Fraser C.M."/>
            <person name="Read T.D."/>
        </authorList>
    </citation>
    <scope>NUCLEOTIDE SEQUENCE [LARGE SCALE GENOMIC DNA]</scope>
    <source>
        <strain>ATCC 10987 / NRS 248</strain>
    </source>
</reference>
<name>RL3_BACC1</name>